<keyword id="KW-1185">Reference proteome</keyword>
<name>Y1109_MYCTU</name>
<evidence type="ECO:0000256" key="1">
    <source>
        <dbReference type="SAM" id="MobiDB-lite"/>
    </source>
</evidence>
<evidence type="ECO:0000269" key="2">
    <source>
    </source>
</evidence>
<proteinExistence type="evidence at protein level"/>
<reference key="1">
    <citation type="journal article" date="1998" name="Nature">
        <title>Deciphering the biology of Mycobacterium tuberculosis from the complete genome sequence.</title>
        <authorList>
            <person name="Cole S.T."/>
            <person name="Brosch R."/>
            <person name="Parkhill J."/>
            <person name="Garnier T."/>
            <person name="Churcher C.M."/>
            <person name="Harris D.E."/>
            <person name="Gordon S.V."/>
            <person name="Eiglmeier K."/>
            <person name="Gas S."/>
            <person name="Barry C.E. III"/>
            <person name="Tekaia F."/>
            <person name="Badcock K."/>
            <person name="Basham D."/>
            <person name="Brown D."/>
            <person name="Chillingworth T."/>
            <person name="Connor R."/>
            <person name="Davies R.M."/>
            <person name="Devlin K."/>
            <person name="Feltwell T."/>
            <person name="Gentles S."/>
            <person name="Hamlin N."/>
            <person name="Holroyd S."/>
            <person name="Hornsby T."/>
            <person name="Jagels K."/>
            <person name="Krogh A."/>
            <person name="McLean J."/>
            <person name="Moule S."/>
            <person name="Murphy L.D."/>
            <person name="Oliver S."/>
            <person name="Osborne J."/>
            <person name="Quail M.A."/>
            <person name="Rajandream M.A."/>
            <person name="Rogers J."/>
            <person name="Rutter S."/>
            <person name="Seeger K."/>
            <person name="Skelton S."/>
            <person name="Squares S."/>
            <person name="Squares R."/>
            <person name="Sulston J.E."/>
            <person name="Taylor K."/>
            <person name="Whitehead S."/>
            <person name="Barrell B.G."/>
        </authorList>
    </citation>
    <scope>NUCLEOTIDE SEQUENCE [LARGE SCALE GENOMIC DNA]</scope>
    <source>
        <strain>ATCC 25618 / H37Rv</strain>
    </source>
</reference>
<reference key="2">
    <citation type="journal article" date="2007" name="Microbiology">
        <title>Experimental determination of translational starts using peptide mass mapping and tandem mass spectrometry within the proteome of Mycobacterium tuberculosis.</title>
        <authorList>
            <person name="Rison S.C."/>
            <person name="Mattow J."/>
            <person name="Jungblut P.R."/>
            <person name="Stoker N.G."/>
        </authorList>
    </citation>
    <scope>IDENTIFICATION BY MASS SPECTROMETRY</scope>
    <scope>DETERMINATION OF TRANSLATIONAL START SITE</scope>
    <scope>CLEAVAGE OF INITIATOR METHIONINE</scope>
    <source>
        <strain>ATCC 25618 / H37Rv</strain>
    </source>
</reference>
<reference key="3">
    <citation type="journal article" date="2011" name="Mol. Cell. Proteomics">
        <title>Proteogenomic analysis of Mycobacterium tuberculosis by high resolution mass spectrometry.</title>
        <authorList>
            <person name="Kelkar D.S."/>
            <person name="Kumar D."/>
            <person name="Kumar P."/>
            <person name="Balakrishnan L."/>
            <person name="Muthusamy B."/>
            <person name="Yadav A.K."/>
            <person name="Shrivastava P."/>
            <person name="Marimuthu A."/>
            <person name="Anand S."/>
            <person name="Sundaram H."/>
            <person name="Kingsbury R."/>
            <person name="Harsha H.C."/>
            <person name="Nair B."/>
            <person name="Prasad T.S."/>
            <person name="Chauhan D.S."/>
            <person name="Katoch K."/>
            <person name="Katoch V.M."/>
            <person name="Kumar P."/>
            <person name="Chaerkady R."/>
            <person name="Ramachandran S."/>
            <person name="Dash D."/>
            <person name="Pandey A."/>
        </authorList>
    </citation>
    <scope>IDENTIFICATION BY MASS SPECTROMETRY [LARGE SCALE ANALYSIS]</scope>
    <source>
        <strain>ATCC 25618 / H37Rv</strain>
    </source>
</reference>
<dbReference type="EMBL" id="AL123456">
    <property type="protein sequence ID" value="CCP43862.1"/>
    <property type="molecule type" value="Genomic_DNA"/>
</dbReference>
<dbReference type="PIR" id="C70898">
    <property type="entry name" value="C70898"/>
</dbReference>
<dbReference type="RefSeq" id="NP_215625.1">
    <property type="nucleotide sequence ID" value="NC_000962.3"/>
</dbReference>
<dbReference type="RefSeq" id="WP_003898730.1">
    <property type="nucleotide sequence ID" value="NZ_NVQJ01000021.1"/>
</dbReference>
<dbReference type="SMR" id="P9WM59"/>
<dbReference type="STRING" id="83332.Rv1109c"/>
<dbReference type="PaxDb" id="83332-Rv1109c"/>
<dbReference type="DNASU" id="885828"/>
<dbReference type="GeneID" id="885828"/>
<dbReference type="KEGG" id="mtu:Rv1109c"/>
<dbReference type="KEGG" id="mtv:RVBD_1109c"/>
<dbReference type="TubercuList" id="Rv1109c"/>
<dbReference type="eggNOG" id="ENOG50334VK">
    <property type="taxonomic scope" value="Bacteria"/>
</dbReference>
<dbReference type="InParanoid" id="P9WM59"/>
<dbReference type="OrthoDB" id="3544242at2"/>
<dbReference type="Proteomes" id="UP000001584">
    <property type="component" value="Chromosome"/>
</dbReference>
<dbReference type="GO" id="GO:0005829">
    <property type="term" value="C:cytosol"/>
    <property type="evidence" value="ECO:0007005"/>
    <property type="project" value="MTBBASE"/>
</dbReference>
<dbReference type="GO" id="GO:0009274">
    <property type="term" value="C:peptidoglycan-based cell wall"/>
    <property type="evidence" value="ECO:0007005"/>
    <property type="project" value="MTBBASE"/>
</dbReference>
<dbReference type="GO" id="GO:0005886">
    <property type="term" value="C:plasma membrane"/>
    <property type="evidence" value="ECO:0007005"/>
    <property type="project" value="MTBBASE"/>
</dbReference>
<dbReference type="InterPro" id="IPR047728">
    <property type="entry name" value="LipDrop-assoc"/>
</dbReference>
<dbReference type="NCBIfam" id="NF033649">
    <property type="entry name" value="LipDrop_Rv1109c"/>
    <property type="match status" value="1"/>
</dbReference>
<feature type="initiator methionine" description="Removed" evidence="2">
    <location>
        <position position="1"/>
    </location>
</feature>
<feature type="chain" id="PRO_0000403669" description="Uncharacterized protein Rv1109c">
    <location>
        <begin position="2"/>
        <end position="212"/>
    </location>
</feature>
<feature type="region of interest" description="Disordered" evidence="1">
    <location>
        <begin position="97"/>
        <end position="151"/>
    </location>
</feature>
<feature type="compositionally biased region" description="Basic and acidic residues" evidence="1">
    <location>
        <begin position="100"/>
        <end position="111"/>
    </location>
</feature>
<accession>P9WM59</accession>
<accession>L0T8N9</accession>
<accession>O53457</accession>
<accession>Q7D8U5</accession>
<sequence>MATAPYGVRLLVGAATVAVEETMKLPRTILMYPMTLASQAAHVVMRFQQGLAELVIKGDNTLETLFPPKDEKPEWATFDEDLPDALEGTSIPLLGLSDASEAKNDDRRSDGRFALYSVSDTPETTTASRSADRSTNPKTAKHPKSAAKPTVPTPAVAAELDYPALTLAQLRARLHTLDVPELEALLAYEQATKARAPFQTLLANRITRATAK</sequence>
<gene>
    <name type="ordered locus">Rv1109c</name>
</gene>
<protein>
    <recommendedName>
        <fullName>Uncharacterized protein Rv1109c</fullName>
    </recommendedName>
</protein>
<organism>
    <name type="scientific">Mycobacterium tuberculosis (strain ATCC 25618 / H37Rv)</name>
    <dbReference type="NCBI Taxonomy" id="83332"/>
    <lineage>
        <taxon>Bacteria</taxon>
        <taxon>Bacillati</taxon>
        <taxon>Actinomycetota</taxon>
        <taxon>Actinomycetes</taxon>
        <taxon>Mycobacteriales</taxon>
        <taxon>Mycobacteriaceae</taxon>
        <taxon>Mycobacterium</taxon>
        <taxon>Mycobacterium tuberculosis complex</taxon>
    </lineage>
</organism>